<dbReference type="EC" id="2.7.4.9"/>
<dbReference type="EMBL" id="M35027">
    <property type="protein sequence ID" value="AAA48180.1"/>
    <property type="molecule type" value="Genomic_DNA"/>
</dbReference>
<dbReference type="PIR" id="E42522">
    <property type="entry name" value="KIVZ5W"/>
</dbReference>
<dbReference type="PDB" id="2V54">
    <property type="method" value="X-ray"/>
    <property type="resolution" value="2.40 A"/>
    <property type="chains" value="A/B=1-204"/>
</dbReference>
<dbReference type="PDB" id="2W0S">
    <property type="method" value="X-ray"/>
    <property type="resolution" value="2.92 A"/>
    <property type="chains" value="A/B=1-204"/>
</dbReference>
<dbReference type="PDBsum" id="2V54"/>
<dbReference type="PDBsum" id="2W0S"/>
<dbReference type="SMR" id="P68693"/>
<dbReference type="DIP" id="DIP-48617N"/>
<dbReference type="BRENDA" id="2.7.4.9">
    <property type="organism ID" value="6591"/>
</dbReference>
<dbReference type="UniPathway" id="UPA00575"/>
<dbReference type="EvolutionaryTrace" id="P68693"/>
<dbReference type="Proteomes" id="UP000008269">
    <property type="component" value="Segment"/>
</dbReference>
<dbReference type="GO" id="GO:0005524">
    <property type="term" value="F:ATP binding"/>
    <property type="evidence" value="ECO:0007669"/>
    <property type="project" value="UniProtKB-KW"/>
</dbReference>
<dbReference type="GO" id="GO:0004798">
    <property type="term" value="F:dTMP kinase activity"/>
    <property type="evidence" value="ECO:0007669"/>
    <property type="project" value="UniProtKB-EC"/>
</dbReference>
<dbReference type="GO" id="GO:0004550">
    <property type="term" value="F:nucleoside diphosphate kinase activity"/>
    <property type="evidence" value="ECO:0007669"/>
    <property type="project" value="TreeGrafter"/>
</dbReference>
<dbReference type="GO" id="GO:0006233">
    <property type="term" value="P:dTDP biosynthetic process"/>
    <property type="evidence" value="ECO:0007669"/>
    <property type="project" value="InterPro"/>
</dbReference>
<dbReference type="GO" id="GO:0006235">
    <property type="term" value="P:dTTP biosynthetic process"/>
    <property type="evidence" value="ECO:0007669"/>
    <property type="project" value="UniProtKB-UniPathway"/>
</dbReference>
<dbReference type="GO" id="GO:0006227">
    <property type="term" value="P:dUDP biosynthetic process"/>
    <property type="evidence" value="ECO:0007669"/>
    <property type="project" value="TreeGrafter"/>
</dbReference>
<dbReference type="Gene3D" id="3.40.50.300">
    <property type="entry name" value="P-loop containing nucleotide triphosphate hydrolases"/>
    <property type="match status" value="1"/>
</dbReference>
<dbReference type="InterPro" id="IPR027417">
    <property type="entry name" value="P-loop_NTPase"/>
</dbReference>
<dbReference type="InterPro" id="IPR039430">
    <property type="entry name" value="Thymidylate_kin-like_dom"/>
</dbReference>
<dbReference type="InterPro" id="IPR018095">
    <property type="entry name" value="Thymidylate_kin_CS"/>
</dbReference>
<dbReference type="InterPro" id="IPR018094">
    <property type="entry name" value="Thymidylate_kinase"/>
</dbReference>
<dbReference type="NCBIfam" id="TIGR00041">
    <property type="entry name" value="DTMP_kinase"/>
    <property type="match status" value="1"/>
</dbReference>
<dbReference type="PANTHER" id="PTHR10344">
    <property type="entry name" value="THYMIDYLATE KINASE"/>
    <property type="match status" value="1"/>
</dbReference>
<dbReference type="PANTHER" id="PTHR10344:SF1">
    <property type="entry name" value="THYMIDYLATE KINASE"/>
    <property type="match status" value="1"/>
</dbReference>
<dbReference type="Pfam" id="PF02223">
    <property type="entry name" value="Thymidylate_kin"/>
    <property type="match status" value="1"/>
</dbReference>
<dbReference type="SUPFAM" id="SSF52540">
    <property type="entry name" value="P-loop containing nucleoside triphosphate hydrolases"/>
    <property type="match status" value="1"/>
</dbReference>
<dbReference type="PROSITE" id="PS01331">
    <property type="entry name" value="THYMIDYLATE_KINASE"/>
    <property type="match status" value="1"/>
</dbReference>
<keyword id="KW-0002">3D-structure</keyword>
<keyword id="KW-0067">ATP-binding</keyword>
<keyword id="KW-0244">Early protein</keyword>
<keyword id="KW-0418">Kinase</keyword>
<keyword id="KW-0545">Nucleotide biosynthesis</keyword>
<keyword id="KW-0547">Nucleotide-binding</keyword>
<keyword id="KW-1185">Reference proteome</keyword>
<keyword id="KW-0808">Transferase</keyword>
<feature type="chain" id="PRO_0000155217" description="Thymidylate kinase">
    <location>
        <begin position="1"/>
        <end position="204"/>
    </location>
</feature>
<feature type="strand" evidence="4">
    <location>
        <begin position="6"/>
        <end position="10"/>
    </location>
</feature>
<feature type="helix" evidence="4">
    <location>
        <begin position="17"/>
        <end position="26"/>
    </location>
</feature>
<feature type="helix" evidence="4">
    <location>
        <begin position="30"/>
        <end position="32"/>
    </location>
</feature>
<feature type="strand" evidence="4">
    <location>
        <begin position="33"/>
        <end position="39"/>
    </location>
</feature>
<feature type="helix" evidence="4">
    <location>
        <begin position="44"/>
        <end position="53"/>
    </location>
</feature>
<feature type="helix" evidence="4">
    <location>
        <begin position="61"/>
        <end position="73"/>
    </location>
</feature>
<feature type="helix" evidence="4">
    <location>
        <begin position="76"/>
        <end position="84"/>
    </location>
</feature>
<feature type="strand" evidence="4">
    <location>
        <begin position="88"/>
        <end position="93"/>
    </location>
</feature>
<feature type="helix" evidence="4">
    <location>
        <begin position="95"/>
        <end position="104"/>
    </location>
</feature>
<feature type="helix" evidence="4">
    <location>
        <begin position="109"/>
        <end position="116"/>
    </location>
</feature>
<feature type="strand" evidence="5">
    <location>
        <begin position="119"/>
        <end position="121"/>
    </location>
</feature>
<feature type="strand" evidence="4">
    <location>
        <begin position="123"/>
        <end position="128"/>
    </location>
</feature>
<feature type="helix" evidence="4">
    <location>
        <begin position="132"/>
        <end position="135"/>
    </location>
</feature>
<feature type="strand" evidence="4">
    <location>
        <begin position="140"/>
        <end position="142"/>
    </location>
</feature>
<feature type="helix" evidence="4">
    <location>
        <begin position="148"/>
        <end position="161"/>
    </location>
</feature>
<feature type="strand" evidence="4">
    <location>
        <begin position="168"/>
        <end position="171"/>
    </location>
</feature>
<feature type="helix" evidence="4">
    <location>
        <begin position="177"/>
        <end position="194"/>
    </location>
</feature>
<proteinExistence type="evidence at protein level"/>
<name>KTHY_VACCC</name>
<evidence type="ECO:0000250" key="1">
    <source>
        <dbReference type="UniProtKB" id="Q80HT9"/>
    </source>
</evidence>
<evidence type="ECO:0000269" key="2">
    <source>
    </source>
</evidence>
<evidence type="ECO:0000305" key="3"/>
<evidence type="ECO:0007829" key="4">
    <source>
        <dbReference type="PDB" id="2V54"/>
    </source>
</evidence>
<evidence type="ECO:0007829" key="5">
    <source>
        <dbReference type="PDB" id="2W0S"/>
    </source>
</evidence>
<protein>
    <recommendedName>
        <fullName>Thymidylate kinase</fullName>
        <ecNumber>2.7.4.9</ecNumber>
    </recommendedName>
    <alternativeName>
        <fullName>dTMP kinase</fullName>
    </alternativeName>
</protein>
<comment type="function">
    <text evidence="1">Poxvirus TMP kinase is able to phosphorylate dTMP, dUMP and also dGMP from any purine and pyrimidine nucleoside triphosphate. The large substrate specificity is explained by the presence of a canal connecting the edge of the dimer interface to the TMP base binding pocket, canal not found in the human homolog.</text>
</comment>
<comment type="catalytic activity">
    <reaction evidence="1">
        <text>dTMP + ATP = dTDP + ADP</text>
        <dbReference type="Rhea" id="RHEA:13517"/>
        <dbReference type="ChEBI" id="CHEBI:30616"/>
        <dbReference type="ChEBI" id="CHEBI:58369"/>
        <dbReference type="ChEBI" id="CHEBI:63528"/>
        <dbReference type="ChEBI" id="CHEBI:456216"/>
        <dbReference type="EC" id="2.7.4.9"/>
    </reaction>
</comment>
<comment type="pathway">
    <text evidence="1">Pyrimidine metabolism; dTTP biosynthesis.</text>
</comment>
<comment type="subunit">
    <text evidence="2">Homodimer; the dimer arrangement is orthogonal and not antiparallel as in human enzyme.</text>
</comment>
<comment type="induction">
    <text>Expressed in the early phase of the viral replicative cycle.</text>
</comment>
<comment type="similarity">
    <text evidence="3">Belongs to the thymidylate kinase family.</text>
</comment>
<organismHost>
    <name type="scientific">Homo sapiens</name>
    <name type="common">Human</name>
    <dbReference type="NCBI Taxonomy" id="9606"/>
</organismHost>
<organism>
    <name type="scientific">Vaccinia virus (strain Copenhagen)</name>
    <name type="common">VACV</name>
    <dbReference type="NCBI Taxonomy" id="10249"/>
    <lineage>
        <taxon>Viruses</taxon>
        <taxon>Varidnaviria</taxon>
        <taxon>Bamfordvirae</taxon>
        <taxon>Nucleocytoviricota</taxon>
        <taxon>Pokkesviricetes</taxon>
        <taxon>Chitovirales</taxon>
        <taxon>Poxviridae</taxon>
        <taxon>Chordopoxvirinae</taxon>
        <taxon>Orthopoxvirus</taxon>
        <taxon>Vaccinia virus</taxon>
    </lineage>
</organism>
<accession>P68693</accession>
<accession>P13410</accession>
<gene>
    <name type="primary">OPG178</name>
    <name type="synonym">TMK</name>
    <name type="ORF">A48R</name>
</gene>
<reference key="1">
    <citation type="journal article" date="1990" name="Virology">
        <title>The complete DNA sequence of vaccinia virus.</title>
        <authorList>
            <person name="Goebel S.J."/>
            <person name="Johnson G.P."/>
            <person name="Perkus M.E."/>
            <person name="Davis S.W."/>
            <person name="Winslow J.P."/>
            <person name="Paoletti E."/>
        </authorList>
    </citation>
    <scope>NUCLEOTIDE SEQUENCE [LARGE SCALE GENOMIC DNA]</scope>
</reference>
<reference key="2">
    <citation type="journal article" date="1990" name="Virology">
        <title>Appendix to 'The complete DNA sequence of vaccinia virus'.</title>
        <authorList>
            <person name="Goebel S.J."/>
            <person name="Johnson G.P."/>
            <person name="Perkus M.E."/>
            <person name="Davis S.W."/>
            <person name="Winslow J.P."/>
            <person name="Paoletti E."/>
        </authorList>
    </citation>
    <scope>NUCLEOTIDE SEQUENCE [LARGE SCALE GENOMIC DNA]</scope>
</reference>
<reference key="3">
    <citation type="journal article" date="2008" name="Proc. Natl. Acad. Sci. U.S.A.">
        <title>Crystal structure of poxvirus thymidylate kinase: an unexpected dimerization has implications for antiviral therapy.</title>
        <authorList>
            <person name="Caillat C."/>
            <person name="Topalis D."/>
            <person name="Agrofoglio L.A."/>
            <person name="Pochet S."/>
            <person name="Balzarini J."/>
            <person name="Deville-Bonne D."/>
            <person name="Meyer P."/>
        </authorList>
    </citation>
    <scope>X-RAY CRYSTALLOGRAPHY (2.40 ANGSTROMS)</scope>
    <scope>SUBUNIT</scope>
</reference>
<sequence>MSRGALIVFEGLDKSGKTTQCMNIMESIPANTIKYLNFPQRSTVTGKMIDDYLTRKKTYNDHIVNLLFCANRWEFASFIQEQLEQGITLIVDRYAFSGVAYAAAKGASMTLSKSYESGLPKPDLVIFLESGSKEINRNVGEEIYEDVTFQQKVLQEYKKMIEEGDIHWQIISSEFEEDVKKELIKNIVIEAIHTVTGPVGQLWM</sequence>